<gene>
    <name evidence="10" type="primary">PABN3</name>
    <name evidence="13" type="ordered locus">At5g10350</name>
    <name evidence="14" type="ORF">F12B17.300</name>
</gene>
<comment type="function">
    <text evidence="2">Involved in the 3'-end formation of mRNA precursors (pre-mRNA) by the addition of a poly(A) tail of 200-250 nt to the upstream cleavage product. Stimulates poly(A) polymerase (PAPOLA) conferring processivity on the poly(A) tail elongation reaction and also controls the poly(A) tail length. Increases the affinity of poly(A) polymerase for RNA. Binds to poly(A) and to poly(G) with high affinity. May protect the poly(A) tail from degradation.</text>
</comment>
<comment type="subunit">
    <text evidence="3 8 9">Monomer and homooligomer (PubMed:18479511). Binds RNA as a monomer and oligomerizes when bound to poly(A) (By similarity). Forms a complex with cleavage and polyadenylation specificity factor (CPSF) subunits PAPS4, PABN1, PABN2, CSTF50 and FIPS5 (PubMed:18479511). Interacts with CSP3 (PubMed:23334891).</text>
</comment>
<comment type="subcellular location">
    <subcellularLocation>
        <location evidence="6 9">Nucleus speckle</location>
    </subcellularLocation>
    <subcellularLocation>
        <location evidence="2">Cytoplasm</location>
    </subcellularLocation>
    <text evidence="2">Shuttles between the nucleus and the cytoplasm but predominantly found in the nucleus.</text>
</comment>
<comment type="alternative products">
    <event type="alternative splicing"/>
    <isoform>
        <id>Q9LX90-1</id>
        <name>1</name>
        <sequence type="displayed"/>
    </isoform>
    <isoform>
        <id>Q9LX90-2</id>
        <name>2</name>
        <sequence type="described" ref="VSP_057235"/>
    </isoform>
    <isoform>
        <id>Q9LX90-3</id>
        <name>3</name>
        <sequence type="described" ref="VSP_057236"/>
    </isoform>
</comment>
<comment type="domain">
    <text evidence="1">The RRM domain is essential for the recognition of specific adenine bases in the poly(A) tail, but not sufficient for poly(A) binding.</text>
</comment>
<dbReference type="EMBL" id="AL353995">
    <property type="protein sequence ID" value="CAB89408.1"/>
    <property type="molecule type" value="Genomic_DNA"/>
</dbReference>
<dbReference type="EMBL" id="CP002688">
    <property type="protein sequence ID" value="AED91528.1"/>
    <property type="molecule type" value="Genomic_DNA"/>
</dbReference>
<dbReference type="EMBL" id="CP002688">
    <property type="protein sequence ID" value="AED91529.1"/>
    <property type="molecule type" value="Genomic_DNA"/>
</dbReference>
<dbReference type="EMBL" id="BT003893">
    <property type="protein sequence ID" value="AAO41941.1"/>
    <property type="molecule type" value="mRNA"/>
</dbReference>
<dbReference type="EMBL" id="BT005003">
    <property type="protein sequence ID" value="AAO50536.1"/>
    <property type="molecule type" value="mRNA"/>
</dbReference>
<dbReference type="PIR" id="T50004">
    <property type="entry name" value="T50004"/>
</dbReference>
<dbReference type="RefSeq" id="NP_196597.1">
    <molecule id="Q9LX90-1"/>
    <property type="nucleotide sequence ID" value="NM_121073.4"/>
</dbReference>
<dbReference type="RefSeq" id="NP_850803.1">
    <molecule id="Q9LX90-3"/>
    <property type="nucleotide sequence ID" value="NM_180472.1"/>
</dbReference>
<dbReference type="SMR" id="Q9LX90"/>
<dbReference type="BioGRID" id="16177">
    <property type="interactions" value="16"/>
</dbReference>
<dbReference type="FunCoup" id="Q9LX90">
    <property type="interactions" value="4392"/>
</dbReference>
<dbReference type="IntAct" id="Q9LX90">
    <property type="interactions" value="8"/>
</dbReference>
<dbReference type="STRING" id="3702.Q9LX90"/>
<dbReference type="PaxDb" id="3702-AT5G10350.1"/>
<dbReference type="ProteomicsDB" id="248648">
    <molecule id="Q9LX90-1"/>
</dbReference>
<dbReference type="EnsemblPlants" id="AT5G10350.1">
    <molecule id="Q9LX90-1"/>
    <property type="protein sequence ID" value="AT5G10350.1"/>
    <property type="gene ID" value="AT5G10350"/>
</dbReference>
<dbReference type="EnsemblPlants" id="AT5G10350.2">
    <molecule id="Q9LX90-3"/>
    <property type="protein sequence ID" value="AT5G10350.2"/>
    <property type="gene ID" value="AT5G10350"/>
</dbReference>
<dbReference type="GeneID" id="830899"/>
<dbReference type="Gramene" id="AT5G10350.1">
    <molecule id="Q9LX90-1"/>
    <property type="protein sequence ID" value="AT5G10350.1"/>
    <property type="gene ID" value="AT5G10350"/>
</dbReference>
<dbReference type="Gramene" id="AT5G10350.2">
    <molecule id="Q9LX90-3"/>
    <property type="protein sequence ID" value="AT5G10350.2"/>
    <property type="gene ID" value="AT5G10350"/>
</dbReference>
<dbReference type="KEGG" id="ath:AT5G10350"/>
<dbReference type="Araport" id="AT5G10350"/>
<dbReference type="TAIR" id="AT5G10350">
    <property type="gene designation" value="RRM"/>
</dbReference>
<dbReference type="eggNOG" id="KOG4209">
    <property type="taxonomic scope" value="Eukaryota"/>
</dbReference>
<dbReference type="InParanoid" id="Q9LX90"/>
<dbReference type="OMA" id="FGFQPRR"/>
<dbReference type="PhylomeDB" id="Q9LX90"/>
<dbReference type="PRO" id="PR:Q9LX90"/>
<dbReference type="Proteomes" id="UP000006548">
    <property type="component" value="Chromosome 5"/>
</dbReference>
<dbReference type="ExpressionAtlas" id="Q9LX90">
    <property type="expression patterns" value="baseline and differential"/>
</dbReference>
<dbReference type="GO" id="GO:0016607">
    <property type="term" value="C:nuclear speck"/>
    <property type="evidence" value="ECO:0000314"/>
    <property type="project" value="UniProtKB"/>
</dbReference>
<dbReference type="GO" id="GO:0005634">
    <property type="term" value="C:nucleus"/>
    <property type="evidence" value="ECO:0000314"/>
    <property type="project" value="TAIR"/>
</dbReference>
<dbReference type="GO" id="GO:0000325">
    <property type="term" value="C:plant-type vacuole"/>
    <property type="evidence" value="ECO:0007005"/>
    <property type="project" value="TAIR"/>
</dbReference>
<dbReference type="GO" id="GO:0008143">
    <property type="term" value="F:poly(A) binding"/>
    <property type="evidence" value="ECO:0000314"/>
    <property type="project" value="TAIR"/>
</dbReference>
<dbReference type="CDD" id="cd12306">
    <property type="entry name" value="RRM_II_PABPs"/>
    <property type="match status" value="1"/>
</dbReference>
<dbReference type="FunFam" id="3.30.70.330:FF:000751">
    <property type="entry name" value="Polyadenylate-binding protein 1"/>
    <property type="match status" value="1"/>
</dbReference>
<dbReference type="Gene3D" id="3.30.70.330">
    <property type="match status" value="1"/>
</dbReference>
<dbReference type="InterPro" id="IPR012677">
    <property type="entry name" value="Nucleotide-bd_a/b_plait_sf"/>
</dbReference>
<dbReference type="InterPro" id="IPR035979">
    <property type="entry name" value="RBD_domain_sf"/>
</dbReference>
<dbReference type="InterPro" id="IPR000504">
    <property type="entry name" value="RRM_dom"/>
</dbReference>
<dbReference type="PANTHER" id="PTHR23236">
    <property type="entry name" value="EUKARYOTIC TRANSLATION INITIATION FACTOR 4B/4H"/>
    <property type="match status" value="1"/>
</dbReference>
<dbReference type="PANTHER" id="PTHR23236:SF102">
    <property type="entry name" value="POLYADENYLATE-BINDING PROTEIN 2-RELATED"/>
    <property type="match status" value="1"/>
</dbReference>
<dbReference type="Pfam" id="PF00076">
    <property type="entry name" value="RRM_1"/>
    <property type="match status" value="1"/>
</dbReference>
<dbReference type="SMART" id="SM00360">
    <property type="entry name" value="RRM"/>
    <property type="match status" value="1"/>
</dbReference>
<dbReference type="SUPFAM" id="SSF54928">
    <property type="entry name" value="RNA-binding domain, RBD"/>
    <property type="match status" value="1"/>
</dbReference>
<dbReference type="PROSITE" id="PS50102">
    <property type="entry name" value="RRM"/>
    <property type="match status" value="1"/>
</dbReference>
<protein>
    <recommendedName>
        <fullName evidence="10">Polyadenylate-binding protein 3</fullName>
        <shortName evidence="11">AtPabN2</shortName>
        <shortName evidence="10">AtPabN3</shortName>
        <shortName evidence="10">Poly(A)-binding protein 3</shortName>
    </recommendedName>
    <alternativeName>
        <fullName evidence="12">Nuclear poly(A)-binding protein 3</fullName>
    </alternativeName>
    <alternativeName>
        <fullName evidence="12">Poly(A)-binding protein III</fullName>
        <shortName evidence="12">PABIII</shortName>
    </alternativeName>
</protein>
<accession>Q9LX90</accession>
<accession>F4KGU0</accession>
<accession>F4KGU1</accession>
<keyword id="KW-0025">Alternative splicing</keyword>
<keyword id="KW-0175">Coiled coil</keyword>
<keyword id="KW-0963">Cytoplasm</keyword>
<keyword id="KW-0539">Nucleus</keyword>
<keyword id="KW-1185">Reference proteome</keyword>
<keyword id="KW-0694">RNA-binding</keyword>
<evidence type="ECO:0000250" key="1">
    <source>
        <dbReference type="UniProtKB" id="Q28165"/>
    </source>
</evidence>
<evidence type="ECO:0000250" key="2">
    <source>
        <dbReference type="UniProtKB" id="Q7KNF2"/>
    </source>
</evidence>
<evidence type="ECO:0000250" key="3">
    <source>
        <dbReference type="UniProtKB" id="Q86U42"/>
    </source>
</evidence>
<evidence type="ECO:0000255" key="4"/>
<evidence type="ECO:0000255" key="5">
    <source>
        <dbReference type="PROSITE-ProRule" id="PRU00176"/>
    </source>
</evidence>
<evidence type="ECO:0000255" key="6">
    <source>
        <dbReference type="PROSITE-ProRule" id="PRU00768"/>
    </source>
</evidence>
<evidence type="ECO:0000256" key="7">
    <source>
        <dbReference type="SAM" id="MobiDB-lite"/>
    </source>
</evidence>
<evidence type="ECO:0000269" key="8">
    <source>
    </source>
</evidence>
<evidence type="ECO:0000269" key="9">
    <source>
    </source>
</evidence>
<evidence type="ECO:0000303" key="10">
    <source>
    </source>
</evidence>
<evidence type="ECO:0000303" key="11">
    <source>
    </source>
</evidence>
<evidence type="ECO:0000305" key="12"/>
<evidence type="ECO:0000312" key="13">
    <source>
        <dbReference type="Araport" id="AT5G10350"/>
    </source>
</evidence>
<evidence type="ECO:0000312" key="14">
    <source>
        <dbReference type="EMBL" id="CAB89408.1"/>
    </source>
</evidence>
<evidence type="ECO:0000312" key="15">
    <source>
        <dbReference type="Proteomes" id="UP000006548"/>
    </source>
</evidence>
<name>PABN3_ARATH</name>
<feature type="chain" id="PRO_0000431330" description="Polyadenylate-binding protein 3">
    <location>
        <begin position="1"/>
        <end position="217"/>
    </location>
</feature>
<feature type="domain" description="RRM" evidence="5">
    <location>
        <begin position="89"/>
        <end position="165"/>
    </location>
</feature>
<feature type="region of interest" description="Disordered" evidence="7">
    <location>
        <begin position="1"/>
        <end position="28"/>
    </location>
</feature>
<feature type="region of interest" description="Necessary for homooligomerization" evidence="3">
    <location>
        <begin position="75"/>
        <end position="216"/>
    </location>
</feature>
<feature type="coiled-coil region" evidence="4">
    <location>
        <begin position="30"/>
        <end position="71"/>
    </location>
</feature>
<feature type="short sequence motif" description="Nuclear localization signal" evidence="6">
    <location>
        <begin position="162"/>
        <end position="169"/>
    </location>
</feature>
<feature type="compositionally biased region" description="Acidic residues" evidence="7">
    <location>
        <begin position="15"/>
        <end position="28"/>
    </location>
</feature>
<feature type="splice variant" id="VSP_057235" description="In isoform 2.">
    <original>MEEEEHEVYGGEIPEVGDTDVPDPDIDMSAADEDAVTELAEMKRRLKEMEEEAAALREMQAKVEKEMGATQDPASMAANQEGKEEVDARSVYVGN</original>
    <variation>MLAFYH</variation>
    <location>
        <begin position="1"/>
        <end position="95"/>
    </location>
</feature>
<feature type="splice variant" id="VSP_057236" description="In isoform 3.">
    <location>
        <begin position="203"/>
        <end position="217"/>
    </location>
</feature>
<reference key="1">
    <citation type="journal article" date="2000" name="Nature">
        <title>Sequence and analysis of chromosome 5 of the plant Arabidopsis thaliana.</title>
        <authorList>
            <person name="Tabata S."/>
            <person name="Kaneko T."/>
            <person name="Nakamura Y."/>
            <person name="Kotani H."/>
            <person name="Kato T."/>
            <person name="Asamizu E."/>
            <person name="Miyajima N."/>
            <person name="Sasamoto S."/>
            <person name="Kimura T."/>
            <person name="Hosouchi T."/>
            <person name="Kawashima K."/>
            <person name="Kohara M."/>
            <person name="Matsumoto M."/>
            <person name="Matsuno A."/>
            <person name="Muraki A."/>
            <person name="Nakayama S."/>
            <person name="Nakazaki N."/>
            <person name="Naruo K."/>
            <person name="Okumura S."/>
            <person name="Shinpo S."/>
            <person name="Takeuchi C."/>
            <person name="Wada T."/>
            <person name="Watanabe A."/>
            <person name="Yamada M."/>
            <person name="Yasuda M."/>
            <person name="Sato S."/>
            <person name="de la Bastide M."/>
            <person name="Huang E."/>
            <person name="Spiegel L."/>
            <person name="Gnoj L."/>
            <person name="O'Shaughnessy A."/>
            <person name="Preston R."/>
            <person name="Habermann K."/>
            <person name="Murray J."/>
            <person name="Johnson D."/>
            <person name="Rohlfing T."/>
            <person name="Nelson J."/>
            <person name="Stoneking T."/>
            <person name="Pepin K."/>
            <person name="Spieth J."/>
            <person name="Sekhon M."/>
            <person name="Armstrong J."/>
            <person name="Becker M."/>
            <person name="Belter E."/>
            <person name="Cordum H."/>
            <person name="Cordes M."/>
            <person name="Courtney L."/>
            <person name="Courtney W."/>
            <person name="Dante M."/>
            <person name="Du H."/>
            <person name="Edwards J."/>
            <person name="Fryman J."/>
            <person name="Haakensen B."/>
            <person name="Lamar E."/>
            <person name="Latreille P."/>
            <person name="Leonard S."/>
            <person name="Meyer R."/>
            <person name="Mulvaney E."/>
            <person name="Ozersky P."/>
            <person name="Riley A."/>
            <person name="Strowmatt C."/>
            <person name="Wagner-McPherson C."/>
            <person name="Wollam A."/>
            <person name="Yoakum M."/>
            <person name="Bell M."/>
            <person name="Dedhia N."/>
            <person name="Parnell L."/>
            <person name="Shah R."/>
            <person name="Rodriguez M."/>
            <person name="Hoon See L."/>
            <person name="Vil D."/>
            <person name="Baker J."/>
            <person name="Kirchoff K."/>
            <person name="Toth K."/>
            <person name="King L."/>
            <person name="Bahret A."/>
            <person name="Miller B."/>
            <person name="Marra M.A."/>
            <person name="Martienssen R."/>
            <person name="McCombie W.R."/>
            <person name="Wilson R.K."/>
            <person name="Murphy G."/>
            <person name="Bancroft I."/>
            <person name="Volckaert G."/>
            <person name="Wambutt R."/>
            <person name="Duesterhoeft A."/>
            <person name="Stiekema W."/>
            <person name="Pohl T."/>
            <person name="Entian K.-D."/>
            <person name="Terryn N."/>
            <person name="Hartley N."/>
            <person name="Bent E."/>
            <person name="Johnson S."/>
            <person name="Langham S.-A."/>
            <person name="McCullagh B."/>
            <person name="Robben J."/>
            <person name="Grymonprez B."/>
            <person name="Zimmermann W."/>
            <person name="Ramsperger U."/>
            <person name="Wedler H."/>
            <person name="Balke K."/>
            <person name="Wedler E."/>
            <person name="Peters S."/>
            <person name="van Staveren M."/>
            <person name="Dirkse W."/>
            <person name="Mooijman P."/>
            <person name="Klein Lankhorst R."/>
            <person name="Weitzenegger T."/>
            <person name="Bothe G."/>
            <person name="Rose M."/>
            <person name="Hauf J."/>
            <person name="Berneiser S."/>
            <person name="Hempel S."/>
            <person name="Feldpausch M."/>
            <person name="Lamberth S."/>
            <person name="Villarroel R."/>
            <person name="Gielen J."/>
            <person name="Ardiles W."/>
            <person name="Bents O."/>
            <person name="Lemcke K."/>
            <person name="Kolesov G."/>
            <person name="Mayer K.F.X."/>
            <person name="Rudd S."/>
            <person name="Schoof H."/>
            <person name="Schueller C."/>
            <person name="Zaccaria P."/>
            <person name="Mewes H.-W."/>
            <person name="Bevan M."/>
            <person name="Fransz P.F."/>
        </authorList>
    </citation>
    <scope>NUCLEOTIDE SEQUENCE [LARGE SCALE GENOMIC DNA]</scope>
    <source>
        <strain>cv. Columbia</strain>
    </source>
</reference>
<reference key="2">
    <citation type="journal article" date="2017" name="Plant J.">
        <title>Araport11: a complete reannotation of the Arabidopsis thaliana reference genome.</title>
        <authorList>
            <person name="Cheng C.Y."/>
            <person name="Krishnakumar V."/>
            <person name="Chan A.P."/>
            <person name="Thibaud-Nissen F."/>
            <person name="Schobel S."/>
            <person name="Town C.D."/>
        </authorList>
    </citation>
    <scope>GENOME REANNOTATION</scope>
    <source>
        <strain>cv. Columbia</strain>
    </source>
</reference>
<reference key="3">
    <citation type="journal article" date="2003" name="Science">
        <title>Empirical analysis of transcriptional activity in the Arabidopsis genome.</title>
        <authorList>
            <person name="Yamada K."/>
            <person name="Lim J."/>
            <person name="Dale J.M."/>
            <person name="Chen H."/>
            <person name="Shinn P."/>
            <person name="Palm C.J."/>
            <person name="Southwick A.M."/>
            <person name="Wu H.C."/>
            <person name="Kim C.J."/>
            <person name="Nguyen M."/>
            <person name="Pham P.K."/>
            <person name="Cheuk R.F."/>
            <person name="Karlin-Newmann G."/>
            <person name="Liu S.X."/>
            <person name="Lam B."/>
            <person name="Sakano H."/>
            <person name="Wu T."/>
            <person name="Yu G."/>
            <person name="Miranda M."/>
            <person name="Quach H.L."/>
            <person name="Tripp M."/>
            <person name="Chang C.H."/>
            <person name="Lee J.M."/>
            <person name="Toriumi M.J."/>
            <person name="Chan M.M."/>
            <person name="Tang C.C."/>
            <person name="Onodera C.S."/>
            <person name="Deng J.M."/>
            <person name="Akiyama K."/>
            <person name="Ansari Y."/>
            <person name="Arakawa T."/>
            <person name="Banh J."/>
            <person name="Banno F."/>
            <person name="Bowser L."/>
            <person name="Brooks S.Y."/>
            <person name="Carninci P."/>
            <person name="Chao Q."/>
            <person name="Choy N."/>
            <person name="Enju A."/>
            <person name="Goldsmith A.D."/>
            <person name="Gurjal M."/>
            <person name="Hansen N.F."/>
            <person name="Hayashizaki Y."/>
            <person name="Johnson-Hopson C."/>
            <person name="Hsuan V.W."/>
            <person name="Iida K."/>
            <person name="Karnes M."/>
            <person name="Khan S."/>
            <person name="Koesema E."/>
            <person name="Ishida J."/>
            <person name="Jiang P.X."/>
            <person name="Jones T."/>
            <person name="Kawai J."/>
            <person name="Kamiya A."/>
            <person name="Meyers C."/>
            <person name="Nakajima M."/>
            <person name="Narusaka M."/>
            <person name="Seki M."/>
            <person name="Sakurai T."/>
            <person name="Satou M."/>
            <person name="Tamse R."/>
            <person name="Vaysberg M."/>
            <person name="Wallender E.K."/>
            <person name="Wong C."/>
            <person name="Yamamura Y."/>
            <person name="Yuan S."/>
            <person name="Shinozaki K."/>
            <person name="Davis R.W."/>
            <person name="Theologis A."/>
            <person name="Ecker J.R."/>
        </authorList>
    </citation>
    <scope>NUCLEOTIDE SEQUENCE [LARGE SCALE MRNA] (ISOFORM 1)</scope>
    <source>
        <strain>cv. Columbia</strain>
    </source>
</reference>
<reference key="4">
    <citation type="journal article" date="2008" name="BMC Genomics">
        <title>Arabidopsis mRNA polyadenylation machinery: comprehensive analysis of protein-protein interactions and gene expression profiling.</title>
        <authorList>
            <person name="Hunt A.G."/>
            <person name="Xu R."/>
            <person name="Addepalli B."/>
            <person name="Rao S."/>
            <person name="Forbes K.P."/>
            <person name="Meeks L.R."/>
            <person name="Xing D."/>
            <person name="Mo M."/>
            <person name="Zhao H."/>
            <person name="Bandyopadhyay A."/>
            <person name="Dampanaboina L."/>
            <person name="Marion A."/>
            <person name="Von Lanken C."/>
            <person name="Li Q.Q."/>
        </authorList>
    </citation>
    <scope>SUBUNIT</scope>
    <scope>HOMODIMER</scope>
    <scope>INTERACTION WITH CSTF50; PAPS4; PABN1; PABN2 AND FIPS5</scope>
    <scope>GENE FAMILY</scope>
    <scope>NOMENCLATURE</scope>
</reference>
<reference key="5">
    <citation type="journal article" date="2013" name="Cell Stress Chaperones">
        <title>Interactome analysis reveals versatile functions of Arabidopsis COLD SHOCK DOMAIN PROTEIN 3 in RNA processing within the nucleus and cytoplasm.</title>
        <authorList>
            <person name="Kim M.H."/>
            <person name="Sonoda Y."/>
            <person name="Sasaki K."/>
            <person name="Kaminaka H."/>
            <person name="Imai R."/>
        </authorList>
    </citation>
    <scope>INTERACTION WITH CSP3</scope>
    <scope>SUBCELLULAR LOCATION</scope>
</reference>
<proteinExistence type="evidence at protein level"/>
<organism evidence="15">
    <name type="scientific">Arabidopsis thaliana</name>
    <name type="common">Mouse-ear cress</name>
    <dbReference type="NCBI Taxonomy" id="3702"/>
    <lineage>
        <taxon>Eukaryota</taxon>
        <taxon>Viridiplantae</taxon>
        <taxon>Streptophyta</taxon>
        <taxon>Embryophyta</taxon>
        <taxon>Tracheophyta</taxon>
        <taxon>Spermatophyta</taxon>
        <taxon>Magnoliopsida</taxon>
        <taxon>eudicotyledons</taxon>
        <taxon>Gunneridae</taxon>
        <taxon>Pentapetalae</taxon>
        <taxon>rosids</taxon>
        <taxon>malvids</taxon>
        <taxon>Brassicales</taxon>
        <taxon>Brassicaceae</taxon>
        <taxon>Camelineae</taxon>
        <taxon>Arabidopsis</taxon>
    </lineage>
</organism>
<sequence>MEEEEHEVYGGEIPEVGDTDVPDPDIDMSAADEDAVTELAEMKRRLKEMEEEAAALREMQAKVEKEMGATQDPASMAANQEGKEEVDARSVYVGNVDYACTPEEVQLHFQTCGTVNRVTILMDKFGQPKGFAYVEFVEVEAVQEALQLNESELHGRQLKVSPKRTNVPGMKQYHPGRFNPSMGYRFRRPFVPPYFYSPYGYGKAPRFRRPMRYMPYQ</sequence>